<dbReference type="EC" id="7.1.1.-" evidence="1"/>
<dbReference type="EMBL" id="DQ673255">
    <property type="protein sequence ID" value="ABG74685.1"/>
    <property type="molecule type" value="Genomic_DNA"/>
</dbReference>
<dbReference type="RefSeq" id="YP_778547.1">
    <property type="nucleotide sequence ID" value="NC_008407.1"/>
</dbReference>
<dbReference type="SMR" id="Q06R74"/>
<dbReference type="GeneID" id="4319838"/>
<dbReference type="GO" id="GO:0009535">
    <property type="term" value="C:chloroplast thylakoid membrane"/>
    <property type="evidence" value="ECO:0007669"/>
    <property type="project" value="UniProtKB-SubCell"/>
</dbReference>
<dbReference type="GO" id="GO:0051287">
    <property type="term" value="F:NAD binding"/>
    <property type="evidence" value="ECO:0007669"/>
    <property type="project" value="InterPro"/>
</dbReference>
<dbReference type="GO" id="GO:0016655">
    <property type="term" value="F:oxidoreductase activity, acting on NAD(P)H, quinone or similar compound as acceptor"/>
    <property type="evidence" value="ECO:0007669"/>
    <property type="project" value="UniProtKB-UniRule"/>
</dbReference>
<dbReference type="GO" id="GO:0048038">
    <property type="term" value="F:quinone binding"/>
    <property type="evidence" value="ECO:0007669"/>
    <property type="project" value="UniProtKB-KW"/>
</dbReference>
<dbReference type="GO" id="GO:0019684">
    <property type="term" value="P:photosynthesis, light reaction"/>
    <property type="evidence" value="ECO:0007669"/>
    <property type="project" value="UniProtKB-UniRule"/>
</dbReference>
<dbReference type="FunFam" id="1.10.645.10:FF:000003">
    <property type="entry name" value="NAD(P)H-quinone oxidoreductase subunit H, chloroplastic"/>
    <property type="match status" value="1"/>
</dbReference>
<dbReference type="Gene3D" id="1.10.645.10">
    <property type="entry name" value="Cytochrome-c3 Hydrogenase, chain B"/>
    <property type="match status" value="1"/>
</dbReference>
<dbReference type="HAMAP" id="MF_01358">
    <property type="entry name" value="NDH1_NuoD"/>
    <property type="match status" value="1"/>
</dbReference>
<dbReference type="InterPro" id="IPR001135">
    <property type="entry name" value="NADH_Q_OxRdtase_suD"/>
</dbReference>
<dbReference type="InterPro" id="IPR014029">
    <property type="entry name" value="NADH_UbQ_OxRdtase_49kDa_CS"/>
</dbReference>
<dbReference type="InterPro" id="IPR022885">
    <property type="entry name" value="NDH1_su_D/H"/>
</dbReference>
<dbReference type="InterPro" id="IPR029014">
    <property type="entry name" value="NiFe-Hase_large"/>
</dbReference>
<dbReference type="NCBIfam" id="NF004739">
    <property type="entry name" value="PRK06075.1"/>
    <property type="match status" value="1"/>
</dbReference>
<dbReference type="NCBIfam" id="NF005649">
    <property type="entry name" value="PRK07415.1"/>
    <property type="match status" value="1"/>
</dbReference>
<dbReference type="PANTHER" id="PTHR11993:SF10">
    <property type="entry name" value="NADH DEHYDROGENASE [UBIQUINONE] IRON-SULFUR PROTEIN 2, MITOCHONDRIAL"/>
    <property type="match status" value="1"/>
</dbReference>
<dbReference type="PANTHER" id="PTHR11993">
    <property type="entry name" value="NADH-UBIQUINONE OXIDOREDUCTASE 49 KDA SUBUNIT"/>
    <property type="match status" value="1"/>
</dbReference>
<dbReference type="Pfam" id="PF00346">
    <property type="entry name" value="Complex1_49kDa"/>
    <property type="match status" value="1"/>
</dbReference>
<dbReference type="SUPFAM" id="SSF56762">
    <property type="entry name" value="HydB/Nqo4-like"/>
    <property type="match status" value="1"/>
</dbReference>
<dbReference type="PROSITE" id="PS00535">
    <property type="entry name" value="COMPLEX1_49K"/>
    <property type="match status" value="1"/>
</dbReference>
<sequence>MIAPTTRKDLMIINMGPHHPSMHGVLRLIITLDGEDVIDCEPILGYLHRGMEKIAENRTILQYLPYVTRWDYLATMFTEAISVNGPEQLGNIQVPKRASYIRTIMLELSRIASHLLWLGPFMADIGAQTPFFYIFREREFIYDLFEAATGMRMMHNFFRIGGIAADLPHGWIDKCLDFCDYFLRGVVEYQKLITRNPIFLERVEGVGIIGAEEALNWGLSGPMLRASGIQWDLRKMDHYECYDEFDWEVQWQKEGDSLARYLVRISEMTESIKIIQQALERIPGGPFENLEIRRFDRIKDTEWNDFEYRFISKKPSPTFELSKQELYVRVEAPKGELGIFLIGDQSVFPWRWKIRPPGFINLQILSQLVKRMKLADIMTILGSIDIIMGEVDR</sequence>
<geneLocation type="chloroplast"/>
<organism>
    <name type="scientific">Jasminum nudiflorum</name>
    <name type="common">Winter jasmine</name>
    <dbReference type="NCBI Taxonomy" id="126431"/>
    <lineage>
        <taxon>Eukaryota</taxon>
        <taxon>Viridiplantae</taxon>
        <taxon>Streptophyta</taxon>
        <taxon>Embryophyta</taxon>
        <taxon>Tracheophyta</taxon>
        <taxon>Spermatophyta</taxon>
        <taxon>Magnoliopsida</taxon>
        <taxon>eudicotyledons</taxon>
        <taxon>Gunneridae</taxon>
        <taxon>Pentapetalae</taxon>
        <taxon>asterids</taxon>
        <taxon>lamiids</taxon>
        <taxon>Lamiales</taxon>
        <taxon>Oleaceae</taxon>
        <taxon>Jasmineae</taxon>
        <taxon>Jasminum</taxon>
    </lineage>
</organism>
<protein>
    <recommendedName>
        <fullName evidence="1">NAD(P)H-quinone oxidoreductase subunit H, chloroplastic</fullName>
        <ecNumber evidence="1">7.1.1.-</ecNumber>
    </recommendedName>
    <alternativeName>
        <fullName>NAD(P)H dehydrogenase subunit H</fullName>
    </alternativeName>
    <alternativeName>
        <fullName evidence="1">NADH-plastoquinone oxidoreductase 49 kDa subunit</fullName>
    </alternativeName>
    <alternativeName>
        <fullName evidence="1">NADH-plastoquinone oxidoreductase subunit H</fullName>
    </alternativeName>
</protein>
<feature type="chain" id="PRO_0000357997" description="NAD(P)H-quinone oxidoreductase subunit H, chloroplastic">
    <location>
        <begin position="1"/>
        <end position="393"/>
    </location>
</feature>
<gene>
    <name evidence="1" type="primary">ndhH</name>
    <name type="ORF">JNC1337</name>
</gene>
<comment type="function">
    <text evidence="1">NDH shuttles electrons from NAD(P)H:plastoquinone, via FMN and iron-sulfur (Fe-S) centers, to quinones in the photosynthetic chain and possibly in a chloroplast respiratory chain. The immediate electron acceptor for the enzyme in this species is believed to be plastoquinone. Couples the redox reaction to proton translocation, and thus conserves the redox energy in a proton gradient.</text>
</comment>
<comment type="catalytic activity">
    <reaction evidence="1">
        <text>a plastoquinone + NADH + (n+1) H(+)(in) = a plastoquinol + NAD(+) + n H(+)(out)</text>
        <dbReference type="Rhea" id="RHEA:42608"/>
        <dbReference type="Rhea" id="RHEA-COMP:9561"/>
        <dbReference type="Rhea" id="RHEA-COMP:9562"/>
        <dbReference type="ChEBI" id="CHEBI:15378"/>
        <dbReference type="ChEBI" id="CHEBI:17757"/>
        <dbReference type="ChEBI" id="CHEBI:57540"/>
        <dbReference type="ChEBI" id="CHEBI:57945"/>
        <dbReference type="ChEBI" id="CHEBI:62192"/>
    </reaction>
</comment>
<comment type="catalytic activity">
    <reaction evidence="1">
        <text>a plastoquinone + NADPH + (n+1) H(+)(in) = a plastoquinol + NADP(+) + n H(+)(out)</text>
        <dbReference type="Rhea" id="RHEA:42612"/>
        <dbReference type="Rhea" id="RHEA-COMP:9561"/>
        <dbReference type="Rhea" id="RHEA-COMP:9562"/>
        <dbReference type="ChEBI" id="CHEBI:15378"/>
        <dbReference type="ChEBI" id="CHEBI:17757"/>
        <dbReference type="ChEBI" id="CHEBI:57783"/>
        <dbReference type="ChEBI" id="CHEBI:58349"/>
        <dbReference type="ChEBI" id="CHEBI:62192"/>
    </reaction>
</comment>
<comment type="subunit">
    <text evidence="1">NDH is composed of at least 16 different subunits, 5 of which are encoded in the nucleus.</text>
</comment>
<comment type="subcellular location">
    <subcellularLocation>
        <location evidence="1">Plastid</location>
        <location evidence="1">Chloroplast thylakoid membrane</location>
        <topology evidence="1">Peripheral membrane protein</topology>
        <orientation evidence="1">Stromal side</orientation>
    </subcellularLocation>
</comment>
<comment type="similarity">
    <text evidence="1">Belongs to the complex I 49 kDa subunit family.</text>
</comment>
<keyword id="KW-0150">Chloroplast</keyword>
<keyword id="KW-0472">Membrane</keyword>
<keyword id="KW-0520">NAD</keyword>
<keyword id="KW-0521">NADP</keyword>
<keyword id="KW-0934">Plastid</keyword>
<keyword id="KW-0618">Plastoquinone</keyword>
<keyword id="KW-0874">Quinone</keyword>
<keyword id="KW-0793">Thylakoid</keyword>
<keyword id="KW-1278">Translocase</keyword>
<keyword id="KW-0813">Transport</keyword>
<reference key="1">
    <citation type="journal article" date="2007" name="Mol. Biol. Evol.">
        <title>Gene relocations within chloroplast genomes of Jasminum and Menodora (Oleaceae) are due to multiple, overlapping inversions.</title>
        <authorList>
            <person name="Lee H.-L."/>
            <person name="Jansen R.K."/>
            <person name="Chumley T.W."/>
            <person name="Kim K.-J."/>
        </authorList>
    </citation>
    <scope>NUCLEOTIDE SEQUENCE [LARGE SCALE GENOMIC DNA]</scope>
</reference>
<proteinExistence type="inferred from homology"/>
<name>NDHH_JASNU</name>
<accession>Q06R74</accession>
<evidence type="ECO:0000255" key="1">
    <source>
        <dbReference type="HAMAP-Rule" id="MF_01358"/>
    </source>
</evidence>